<comment type="function">
    <text evidence="2">Molecular chaperone that promotes the maturation, structural maintenance and proper regulation of specific target proteins involved for instance in cell cycle control and signal transduction. Undergoes a functional cycle that is linked to its ATPase activity which is essential for its chaperone activity. This cycle probably induces conformational changes in the client proteins, thereby causing their activation. Interacts dynamically with various co-chaperones that modulate its substrate recognition, ATPase cycle and chaperone function. Engages with a range of client protein classes via its interaction with various co-chaperone proteins or complexes, that act as adapters, simultaneously able to interact with the specific client and the central chaperone itself. Recruitment of ATP and co-chaperone followed by client protein forms a functional chaperone. After the completion of the chaperoning process, properly folded client protein and co-chaperone leave HSP90 in an ADP-bound partially open conformation and finally, ADP is released from HSP90 which acquires an open conformation for the next cycle. Plays a critical role in mitochondrial import, delivers preproteins to the mitochondrial import receptor TOMM70. Apart from its chaperone activity, it also plays a role in the regulation of the transcription machinery. HSP90 and its co-chaperones modulate transcription at least at three different levels. In the first place, they alter the steady-state levels of certain transcription factors in response to various physiological cues. Second, they modulate the activity of certain epigenetic modifiers, such as histone deacetylases or DNA methyl transferases, and thereby respond to the change in the environment. Third, they participate in the eviction of histones from the promoter region of certain genes and thereby turn on gene expression. Binds bacterial lipopolysaccharide (LPS) and mediates LPS-induced inflammatory response, including TNF secretion by monocytes. Antagonizes STUB1-mediated inhibition of TGF-beta signaling via inhibition of STUB1-mediated SMAD3 ubiquitination and degradation. Mediates the association of TOMM70 with IRF3 or TBK1 in mitochondrial outer membrane which promotes host antiviral response.</text>
</comment>
<comment type="catalytic activity">
    <reaction evidence="2">
        <text>ATP + H2O = ADP + phosphate + H(+)</text>
        <dbReference type="Rhea" id="RHEA:13065"/>
        <dbReference type="ChEBI" id="CHEBI:15377"/>
        <dbReference type="ChEBI" id="CHEBI:15378"/>
        <dbReference type="ChEBI" id="CHEBI:30616"/>
        <dbReference type="ChEBI" id="CHEBI:43474"/>
        <dbReference type="ChEBI" id="CHEBI:456216"/>
        <dbReference type="EC" id="3.6.4.10"/>
    </reaction>
</comment>
<comment type="activity regulation">
    <text evidence="2">In the resting state, through the dimerization of its C-terminal domain, HSP90 forms a homodimer which is defined as the open conformation. Upon ATP-binding, the N-terminal domain undergoes significant conformational changes and comes in contact to form an active closed conformation. After HSP90 finishes its chaperoning tasks of assisting the proper folding, stabilization and activation of client proteins under the active state, ATP molecule is hydrolyzed to ADP which then dissociates from HSP90 and directs the protein back to the resting state. Co-chaperone TSC1 promotes ATP binding and inhibits HSP90AA1 ATPase activity. Binding to phosphorylated AHSA1 promotes HSP90AA1 ATPase activity. Inhibited by geldanamycin, Ganetespib (STA-9090) and SNX-2112.</text>
</comment>
<comment type="subunit">
    <text evidence="2 3 6 7">Homodimer (By similarity). Identified in NR3C1/GCR steroid receptor-chaperone complexes formed at least by NR3C1, HSP90AA1 and a variety of proteins containing TPR repeats such as FKBP4, FKBP5, PPID, PPP5C or STIP1 (By similarity). Forms a complex containing HSP90AA1, TSC1 and TSC2; TSC1 is required to recruit TCS2 to the complex (By similarity). The closed form interacts (via the middle domain and TPR repeat-binding motif) with co-chaperone TSC1 (via C-terminus) (By similarity). Interacts with TOM34 (By similarity). Interacts with TERT; the interaction, together with PTGES3, is required for correct assembly and stabilization of the TERT holoenzyme complex (By similarity). Interacts with CHORDC1 and DNAJC7 (By similarity). Interacts with STUB1 and UBE2N; may couple the chaperone and ubiquitination systems (By similarity). Interacts (via TPR repeat-binding motif) with PPP5C (via TPR repeats); the interaction is direct and activates PPP5C phosphatase activity (By similarity). Following LPS binding, may form a complex with CXCR4, GDF5 and HSPA8 (By similarity). Interacts with KSR1 (By similarity). Interacts with co-chaperone CDC37 (via C-terminus); the interaction inhibits HSP90AA1 ATPase activity (By similarity). May interact with NWD1 (By similarity). Interacts with FNIP1 and FNIP2; the interaction inhibits HSP90AA1 ATPase activity (By similarity). Interacts with co-chaperone AHSA1 (phosphorylated on 'Tyr-223'); the interaction activates HSP90AA1 ATPase activity and results in the dissociation of TSC1 from HSP90AA1 (By similarity). Interacts with FLCN in the presence of FNIP1 (By similarity). Interacts with HSP70, STIP1 and PTGES3 (By similarity). Interacts with SGTA (via TPR repeats) (PubMed:15708368). Interacts with SMYD3; this interaction enhances SMYD3 histone-lysine N-methyltransferase (By similarity). Interacts with TTC1 (via TPR repeats) (By similarity). Interacts with HSF1 in an ATP-dependent manner (By similarity). Interacts with MET; the interaction suppresses MET kinase activity (By similarity). Interacts with ERBB2 in an ATP-dependent manner; the interaction suppresses ERBB2 kinase activity (By similarity). Interacts with HIF1A, KEAP1 and RHOBTB2 (By similarity). Interacts with HSF1; this interaction is decreased in a IER5-dependent manner, promoting HSF1 accumulation in the nucleus, homotrimerization and DNA-binding activities. Interacts with STUB1 and SMAD3 (By similarity). Interacts with HSP90AB1; interaction is constitutive (By similarity). Interacts with HECTD1 (via N-terminus) (By similarity). Interacts with NR3C1 (via domain NR LBD) and NR1D1 (via domain NR LBD) (By similarity). Interacts with NLPR12. Interacts with PDCL3 (PubMed:27496612). Interacts with TOMM70; the interaction is required for preprotein mitochondrial import. Interacts with TOMM70, IRF3 and TBK1; the interactions are direct and mediate the association of TOMM70 with IRF3 and TBK1 (By similarity). Forms a complex with ASL, ASS1 and NOS2; the complex regulates cell-autonomous L-arginine synthesis and citrulline recycling while channeling extracellular L-arginine to nitric oxide synthesis pathway.</text>
</comment>
<comment type="subcellular location">
    <subcellularLocation>
        <location evidence="3">Nucleus</location>
    </subcellularLocation>
    <subcellularLocation>
        <location evidence="3">Cytoplasm</location>
    </subcellularLocation>
    <subcellularLocation>
        <location evidence="2">Melanosome</location>
    </subcellularLocation>
    <subcellularLocation>
        <location evidence="2">Cell membrane</location>
    </subcellularLocation>
    <subcellularLocation>
        <location evidence="2">Mitochondrion</location>
    </subcellularLocation>
</comment>
<comment type="domain">
    <text evidence="2">The TPR repeat-binding motif mediates interaction with TPR repeat-containing proteins like the co-chaperone STUB1.</text>
</comment>
<comment type="PTM">
    <text evidence="2">ISGylated.</text>
</comment>
<comment type="PTM">
    <text evidence="2">S-nitrosylated; negatively regulates the ATPase activity and the activation of eNOS by HSP90AA1.</text>
</comment>
<comment type="PTM">
    <text evidence="3">Ubiquitinated via 'Lys-63'-linked polyubiquitination by HECTD1. Ubiquitination promotes translocation into the cytoplasm away from the membrane and secretory pathways.</text>
</comment>
<comment type="similarity">
    <text evidence="8">Belongs to the heat shock protein 90 family.</text>
</comment>
<evidence type="ECO:0000250" key="1"/>
<evidence type="ECO:0000250" key="2">
    <source>
        <dbReference type="UniProtKB" id="P07900"/>
    </source>
</evidence>
<evidence type="ECO:0000250" key="3">
    <source>
        <dbReference type="UniProtKB" id="P07901"/>
    </source>
</evidence>
<evidence type="ECO:0000256" key="4">
    <source>
        <dbReference type="SAM" id="MobiDB-lite"/>
    </source>
</evidence>
<evidence type="ECO:0000269" key="5">
    <source>
    </source>
</evidence>
<evidence type="ECO:0000269" key="6">
    <source>
    </source>
</evidence>
<evidence type="ECO:0000269" key="7">
    <source>
    </source>
</evidence>
<evidence type="ECO:0000305" key="8"/>
<evidence type="ECO:0000312" key="9">
    <source>
        <dbReference type="RGD" id="631409"/>
    </source>
</evidence>
<evidence type="ECO:0007744" key="10">
    <source>
    </source>
</evidence>
<keyword id="KW-0007">Acetylation</keyword>
<keyword id="KW-0067">ATP-binding</keyword>
<keyword id="KW-1003">Cell membrane</keyword>
<keyword id="KW-0143">Chaperone</keyword>
<keyword id="KW-0963">Cytoplasm</keyword>
<keyword id="KW-0903">Direct protein sequencing</keyword>
<keyword id="KW-0378">Hydrolase</keyword>
<keyword id="KW-0472">Membrane</keyword>
<keyword id="KW-0496">Mitochondrion</keyword>
<keyword id="KW-0547">Nucleotide-binding</keyword>
<keyword id="KW-0539">Nucleus</keyword>
<keyword id="KW-0597">Phosphoprotein</keyword>
<keyword id="KW-1185">Reference proteome</keyword>
<keyword id="KW-0702">S-nitrosylation</keyword>
<keyword id="KW-0346">Stress response</keyword>
<keyword id="KW-0832">Ubl conjugation</keyword>
<accession>P82995</accession>
<accession>Q91XW0</accession>
<protein>
    <recommendedName>
        <fullName evidence="8">Heat shock protein HSP 90-alpha</fullName>
        <ecNumber evidence="2">3.6.4.10</ecNumber>
    </recommendedName>
    <alternativeName>
        <fullName>Heat shock 86 kDa</fullName>
        <shortName>HSP 86</shortName>
        <shortName>HSP86</shortName>
    </alternativeName>
</protein>
<dbReference type="EC" id="3.6.4.10" evidence="2"/>
<dbReference type="EMBL" id="AJ297736">
    <property type="protein sequence ID" value="CAC39453.1"/>
    <property type="molecule type" value="Genomic_DNA"/>
</dbReference>
<dbReference type="EMBL" id="AJ428213">
    <property type="protein sequence ID" value="CAD21648.1"/>
    <property type="molecule type" value="mRNA"/>
</dbReference>
<dbReference type="EMBL" id="BC072489">
    <property type="protein sequence ID" value="AAH72489.1"/>
    <property type="molecule type" value="mRNA"/>
</dbReference>
<dbReference type="EMBL" id="BC085120">
    <property type="protein sequence ID" value="AAH85120.1"/>
    <property type="molecule type" value="mRNA"/>
</dbReference>
<dbReference type="RefSeq" id="NP_786937.1">
    <property type="nucleotide sequence ID" value="NM_175761.2"/>
</dbReference>
<dbReference type="RefSeq" id="XP_008763191.1">
    <property type="nucleotide sequence ID" value="XM_008764969.2"/>
</dbReference>
<dbReference type="SMR" id="P82995"/>
<dbReference type="BioGRID" id="256205">
    <property type="interactions" value="30"/>
</dbReference>
<dbReference type="CORUM" id="P82995"/>
<dbReference type="FunCoup" id="P82995">
    <property type="interactions" value="2729"/>
</dbReference>
<dbReference type="IntAct" id="P82995">
    <property type="interactions" value="7"/>
</dbReference>
<dbReference type="MINT" id="P82995"/>
<dbReference type="STRING" id="10116.ENSRNOP00000009556"/>
<dbReference type="CarbonylDB" id="P82995"/>
<dbReference type="GlyGen" id="P82995">
    <property type="glycosylation" value="1 site, 1 O-linked glycan (1 site)"/>
</dbReference>
<dbReference type="iPTMnet" id="P82995"/>
<dbReference type="PhosphoSitePlus" id="P82995"/>
<dbReference type="jPOST" id="P82995"/>
<dbReference type="PaxDb" id="10116-ENSRNOP00000009556"/>
<dbReference type="Ensembl" id="ENSRNOT00000086310.2">
    <property type="protein sequence ID" value="ENSRNOP00000075715.1"/>
    <property type="gene ID" value="ENSRNOG00000059714.2"/>
</dbReference>
<dbReference type="GeneID" id="299331"/>
<dbReference type="KEGG" id="rno:299331"/>
<dbReference type="UCSC" id="RGD:631409">
    <property type="organism name" value="rat"/>
</dbReference>
<dbReference type="AGR" id="RGD:631409"/>
<dbReference type="CTD" id="3320"/>
<dbReference type="RGD" id="631409">
    <property type="gene designation" value="Hsp90aa1"/>
</dbReference>
<dbReference type="eggNOG" id="KOG0019">
    <property type="taxonomic scope" value="Eukaryota"/>
</dbReference>
<dbReference type="GeneTree" id="ENSGT01020000230401"/>
<dbReference type="HOGENOM" id="CLU_006684_1_3_1"/>
<dbReference type="InParanoid" id="P82995"/>
<dbReference type="OMA" id="MRRMKEM"/>
<dbReference type="OrthoDB" id="5426351at2759"/>
<dbReference type="PhylomeDB" id="P82995"/>
<dbReference type="TreeFam" id="TF300686"/>
<dbReference type="Reactome" id="R-RNO-1227986">
    <property type="pathway name" value="Signaling by ERBB2"/>
</dbReference>
<dbReference type="Reactome" id="R-RNO-1474151">
    <property type="pathway name" value="Tetrahydrobiopterin (BH4) synthesis, recycling, salvage and regulation"/>
</dbReference>
<dbReference type="Reactome" id="R-RNO-168928">
    <property type="pathway name" value="DDX58/IFIH1-mediated induction of interferon-alpha/beta"/>
</dbReference>
<dbReference type="Reactome" id="R-RNO-2029482">
    <property type="pathway name" value="Regulation of actin dynamics for phagocytic cup formation"/>
</dbReference>
<dbReference type="Reactome" id="R-RNO-203615">
    <property type="pathway name" value="eNOS activation"/>
</dbReference>
<dbReference type="Reactome" id="R-RNO-2565942">
    <property type="pathway name" value="Regulation of PLK1 Activity at G2/M Transition"/>
</dbReference>
<dbReference type="Reactome" id="R-RNO-3371497">
    <property type="pathway name" value="HSP90 chaperone cycle for steroid hormone receptors (SHR) in the presence of ligand"/>
</dbReference>
<dbReference type="Reactome" id="R-RNO-3371511">
    <property type="pathway name" value="HSF1 activation"/>
</dbReference>
<dbReference type="Reactome" id="R-RNO-3371568">
    <property type="pathway name" value="Attenuation phase"/>
</dbReference>
<dbReference type="Reactome" id="R-RNO-3371571">
    <property type="pathway name" value="HSF1-dependent transactivation"/>
</dbReference>
<dbReference type="Reactome" id="R-RNO-380259">
    <property type="pathway name" value="Loss of Nlp from mitotic centrosomes"/>
</dbReference>
<dbReference type="Reactome" id="R-RNO-380270">
    <property type="pathway name" value="Recruitment of mitotic centrosome proteins and complexes"/>
</dbReference>
<dbReference type="Reactome" id="R-RNO-380284">
    <property type="pathway name" value="Loss of proteins required for interphase microtubule organization from the centrosome"/>
</dbReference>
<dbReference type="Reactome" id="R-RNO-380320">
    <property type="pathway name" value="Recruitment of NuMA to mitotic centrosomes"/>
</dbReference>
<dbReference type="Reactome" id="R-RNO-399954">
    <property type="pathway name" value="Sema3A PAK dependent Axon repulsion"/>
</dbReference>
<dbReference type="Reactome" id="R-RNO-4420097">
    <property type="pathway name" value="VEGFA-VEGFR2 Pathway"/>
</dbReference>
<dbReference type="Reactome" id="R-RNO-5218920">
    <property type="pathway name" value="VEGFR2 mediated vascular permeability"/>
</dbReference>
<dbReference type="Reactome" id="R-RNO-5620912">
    <property type="pathway name" value="Anchoring of the basal body to the plasma membrane"/>
</dbReference>
<dbReference type="Reactome" id="R-RNO-5675482">
    <property type="pathway name" value="Regulation of necroptotic cell death"/>
</dbReference>
<dbReference type="Reactome" id="R-RNO-6798695">
    <property type="pathway name" value="Neutrophil degranulation"/>
</dbReference>
<dbReference type="Reactome" id="R-RNO-8852276">
    <property type="pathway name" value="The role of GTSE1 in G2/M progression after G2 checkpoint"/>
</dbReference>
<dbReference type="Reactome" id="R-RNO-8854518">
    <property type="pathway name" value="AURKA Activation by TPX2"/>
</dbReference>
<dbReference type="Reactome" id="R-RNO-8863795">
    <property type="pathway name" value="Downregulation of ERBB2 signaling"/>
</dbReference>
<dbReference type="Reactome" id="R-RNO-8939211">
    <property type="pathway name" value="ESR-mediated signaling"/>
</dbReference>
<dbReference type="Reactome" id="R-RNO-9009391">
    <property type="pathway name" value="Extra-nuclear estrogen signaling"/>
</dbReference>
<dbReference type="Reactome" id="R-RNO-9013418">
    <property type="pathway name" value="RHOBTB2 GTPase cycle"/>
</dbReference>
<dbReference type="Reactome" id="R-RNO-9018519">
    <property type="pathway name" value="Estrogen-dependent gene expression"/>
</dbReference>
<dbReference type="Reactome" id="R-RNO-9652282">
    <property type="pathway name" value="Drug-mediated inhibition of ERBB2 signaling"/>
</dbReference>
<dbReference type="PRO" id="PR:P82995"/>
<dbReference type="Proteomes" id="UP000002494">
    <property type="component" value="Chromosome 6"/>
</dbReference>
<dbReference type="Bgee" id="ENSRNOG00000007219">
    <property type="expression patterns" value="Expressed in cerebellum and 9 other cell types or tissues"/>
</dbReference>
<dbReference type="GO" id="GO:0016324">
    <property type="term" value="C:apical plasma membrane"/>
    <property type="evidence" value="ECO:0000314"/>
    <property type="project" value="RGD"/>
</dbReference>
<dbReference type="GO" id="GO:0044295">
    <property type="term" value="C:axonal growth cone"/>
    <property type="evidence" value="ECO:0000266"/>
    <property type="project" value="RGD"/>
</dbReference>
<dbReference type="GO" id="GO:0016323">
    <property type="term" value="C:basolateral plasma membrane"/>
    <property type="evidence" value="ECO:0000314"/>
    <property type="project" value="RGD"/>
</dbReference>
<dbReference type="GO" id="GO:0031526">
    <property type="term" value="C:brush border membrane"/>
    <property type="evidence" value="ECO:0000314"/>
    <property type="project" value="RGD"/>
</dbReference>
<dbReference type="GO" id="GO:0009986">
    <property type="term" value="C:cell surface"/>
    <property type="evidence" value="ECO:0000314"/>
    <property type="project" value="RGD"/>
</dbReference>
<dbReference type="GO" id="GO:0005737">
    <property type="term" value="C:cytoplasm"/>
    <property type="evidence" value="ECO:0000250"/>
    <property type="project" value="AgBase"/>
</dbReference>
<dbReference type="GO" id="GO:0005829">
    <property type="term" value="C:cytosol"/>
    <property type="evidence" value="ECO:0000266"/>
    <property type="project" value="RGD"/>
</dbReference>
<dbReference type="GO" id="GO:0044294">
    <property type="term" value="C:dendritic growth cone"/>
    <property type="evidence" value="ECO:0000266"/>
    <property type="project" value="RGD"/>
</dbReference>
<dbReference type="GO" id="GO:0043202">
    <property type="term" value="C:lysosomal lumen"/>
    <property type="evidence" value="ECO:0000304"/>
    <property type="project" value="Reactome"/>
</dbReference>
<dbReference type="GO" id="GO:0005765">
    <property type="term" value="C:lysosomal membrane"/>
    <property type="evidence" value="ECO:0000303"/>
    <property type="project" value="ParkinsonsUK-UCL"/>
</dbReference>
<dbReference type="GO" id="GO:0042470">
    <property type="term" value="C:melanosome"/>
    <property type="evidence" value="ECO:0007669"/>
    <property type="project" value="UniProtKB-SubCell"/>
</dbReference>
<dbReference type="GO" id="GO:0005739">
    <property type="term" value="C:mitochondrion"/>
    <property type="evidence" value="ECO:0000250"/>
    <property type="project" value="UniProtKB"/>
</dbReference>
<dbReference type="GO" id="GO:0043209">
    <property type="term" value="C:myelin sheath"/>
    <property type="evidence" value="ECO:0000314"/>
    <property type="project" value="UniProtKB"/>
</dbReference>
<dbReference type="GO" id="GO:0043025">
    <property type="term" value="C:neuronal cell body"/>
    <property type="evidence" value="ECO:0000314"/>
    <property type="project" value="RGD"/>
</dbReference>
<dbReference type="GO" id="GO:0005654">
    <property type="term" value="C:nucleoplasm"/>
    <property type="evidence" value="ECO:0007669"/>
    <property type="project" value="Ensembl"/>
</dbReference>
<dbReference type="GO" id="GO:0005634">
    <property type="term" value="C:nucleus"/>
    <property type="evidence" value="ECO:0000250"/>
    <property type="project" value="AgBase"/>
</dbReference>
<dbReference type="GO" id="GO:0048471">
    <property type="term" value="C:perinuclear region of cytoplasm"/>
    <property type="evidence" value="ECO:0000314"/>
    <property type="project" value="RGD"/>
</dbReference>
<dbReference type="GO" id="GO:0005886">
    <property type="term" value="C:plasma membrane"/>
    <property type="evidence" value="ECO:0000318"/>
    <property type="project" value="GO_Central"/>
</dbReference>
<dbReference type="GO" id="GO:0032991">
    <property type="term" value="C:protein-containing complex"/>
    <property type="evidence" value="ECO:0000314"/>
    <property type="project" value="RGD"/>
</dbReference>
<dbReference type="GO" id="GO:0036126">
    <property type="term" value="C:sperm flagellum"/>
    <property type="evidence" value="ECO:0000314"/>
    <property type="project" value="RGD"/>
</dbReference>
<dbReference type="GO" id="GO:0097226">
    <property type="term" value="C:sperm mitochondrial sheath"/>
    <property type="evidence" value="ECO:0000314"/>
    <property type="project" value="RGD"/>
</dbReference>
<dbReference type="GO" id="GO:0097524">
    <property type="term" value="C:sperm plasma membrane"/>
    <property type="evidence" value="ECO:0000314"/>
    <property type="project" value="RGD"/>
</dbReference>
<dbReference type="GO" id="GO:0005524">
    <property type="term" value="F:ATP binding"/>
    <property type="evidence" value="ECO:0000314"/>
    <property type="project" value="RGD"/>
</dbReference>
<dbReference type="GO" id="GO:0016887">
    <property type="term" value="F:ATP hydrolysis activity"/>
    <property type="evidence" value="ECO:0000266"/>
    <property type="project" value="RGD"/>
</dbReference>
<dbReference type="GO" id="GO:0140662">
    <property type="term" value="F:ATP-dependent protein folding chaperone"/>
    <property type="evidence" value="ECO:0007669"/>
    <property type="project" value="InterPro"/>
</dbReference>
<dbReference type="GO" id="GO:0002135">
    <property type="term" value="F:CTP binding"/>
    <property type="evidence" value="ECO:0000314"/>
    <property type="project" value="RGD"/>
</dbReference>
<dbReference type="GO" id="GO:0032564">
    <property type="term" value="F:dATP binding"/>
    <property type="evidence" value="ECO:0000314"/>
    <property type="project" value="RGD"/>
</dbReference>
<dbReference type="GO" id="GO:0097718">
    <property type="term" value="F:disordered domain specific binding"/>
    <property type="evidence" value="ECO:0000266"/>
    <property type="project" value="RGD"/>
</dbReference>
<dbReference type="GO" id="GO:0070182">
    <property type="term" value="F:DNA polymerase binding"/>
    <property type="evidence" value="ECO:0000266"/>
    <property type="project" value="RGD"/>
</dbReference>
<dbReference type="GO" id="GO:0140767">
    <property type="term" value="F:enzyme-substrate adaptor activity"/>
    <property type="evidence" value="ECO:0000266"/>
    <property type="project" value="RGD"/>
</dbReference>
<dbReference type="GO" id="GO:0005525">
    <property type="term" value="F:GTP binding"/>
    <property type="evidence" value="ECO:0000314"/>
    <property type="project" value="RGD"/>
</dbReference>
<dbReference type="GO" id="GO:0051020">
    <property type="term" value="F:GTPase binding"/>
    <property type="evidence" value="ECO:0000266"/>
    <property type="project" value="RGD"/>
</dbReference>
<dbReference type="GO" id="GO:0042826">
    <property type="term" value="F:histone deacetylase binding"/>
    <property type="evidence" value="ECO:0000266"/>
    <property type="project" value="RGD"/>
</dbReference>
<dbReference type="GO" id="GO:0042802">
    <property type="term" value="F:identical protein binding"/>
    <property type="evidence" value="ECO:0000266"/>
    <property type="project" value="RGD"/>
</dbReference>
<dbReference type="GO" id="GO:0003729">
    <property type="term" value="F:mRNA binding"/>
    <property type="evidence" value="ECO:0000314"/>
    <property type="project" value="RGD"/>
</dbReference>
<dbReference type="GO" id="GO:0030235">
    <property type="term" value="F:nitric-oxide synthase regulator activity"/>
    <property type="evidence" value="ECO:0000250"/>
    <property type="project" value="UniProtKB"/>
</dbReference>
<dbReference type="GO" id="GO:0140597">
    <property type="term" value="F:protein carrier chaperone"/>
    <property type="evidence" value="ECO:0000303"/>
    <property type="project" value="ParkinsonsUK-UCL"/>
</dbReference>
<dbReference type="GO" id="GO:0044183">
    <property type="term" value="F:protein folding chaperone"/>
    <property type="evidence" value="ECO:0000266"/>
    <property type="project" value="RGD"/>
</dbReference>
<dbReference type="GO" id="GO:0042803">
    <property type="term" value="F:protein homodimerization activity"/>
    <property type="evidence" value="ECO:0000266"/>
    <property type="project" value="RGD"/>
</dbReference>
<dbReference type="GO" id="GO:0019903">
    <property type="term" value="F:protein phosphatase binding"/>
    <property type="evidence" value="ECO:0000353"/>
    <property type="project" value="RGD"/>
</dbReference>
<dbReference type="GO" id="GO:1990782">
    <property type="term" value="F:protein tyrosine kinase binding"/>
    <property type="evidence" value="ECO:0000266"/>
    <property type="project" value="RGD"/>
</dbReference>
<dbReference type="GO" id="GO:0051022">
    <property type="term" value="F:Rho GDP-dissociation inhibitor binding"/>
    <property type="evidence" value="ECO:0000314"/>
    <property type="project" value="RGD"/>
</dbReference>
<dbReference type="GO" id="GO:0097110">
    <property type="term" value="F:scaffold protein binding"/>
    <property type="evidence" value="ECO:0000266"/>
    <property type="project" value="RGD"/>
</dbReference>
<dbReference type="GO" id="GO:0017098">
    <property type="term" value="F:sulfonylurea receptor binding"/>
    <property type="evidence" value="ECO:0000353"/>
    <property type="project" value="RGD"/>
</dbReference>
<dbReference type="GO" id="GO:0048156">
    <property type="term" value="F:tau protein binding"/>
    <property type="evidence" value="ECO:0000353"/>
    <property type="project" value="RGD"/>
</dbReference>
<dbReference type="GO" id="GO:0030911">
    <property type="term" value="F:TPR domain binding"/>
    <property type="evidence" value="ECO:0000250"/>
    <property type="project" value="UniProtKB"/>
</dbReference>
<dbReference type="GO" id="GO:0044325">
    <property type="term" value="F:transmembrane transporter binding"/>
    <property type="evidence" value="ECO:0000353"/>
    <property type="project" value="RGD"/>
</dbReference>
<dbReference type="GO" id="GO:0031625">
    <property type="term" value="F:ubiquitin protein ligase binding"/>
    <property type="evidence" value="ECO:0000266"/>
    <property type="project" value="RGD"/>
</dbReference>
<dbReference type="GO" id="GO:0051082">
    <property type="term" value="F:unfolded protein binding"/>
    <property type="evidence" value="ECO:0000318"/>
    <property type="project" value="GO_Central"/>
</dbReference>
<dbReference type="GO" id="GO:0002134">
    <property type="term" value="F:UTP binding"/>
    <property type="evidence" value="ECO:0000314"/>
    <property type="project" value="RGD"/>
</dbReference>
<dbReference type="GO" id="GO:0002218">
    <property type="term" value="P:activation of innate immune response"/>
    <property type="evidence" value="ECO:0000250"/>
    <property type="project" value="UniProtKB"/>
</dbReference>
<dbReference type="GO" id="GO:0010659">
    <property type="term" value="P:cardiac muscle cell apoptotic process"/>
    <property type="evidence" value="ECO:0000270"/>
    <property type="project" value="RGD"/>
</dbReference>
<dbReference type="GO" id="GO:0034605">
    <property type="term" value="P:cellular response to heat"/>
    <property type="evidence" value="ECO:0000266"/>
    <property type="project" value="RGD"/>
</dbReference>
<dbReference type="GO" id="GO:0098586">
    <property type="term" value="P:cellular response to virus"/>
    <property type="evidence" value="ECO:0000250"/>
    <property type="project" value="UniProtKB"/>
</dbReference>
<dbReference type="GO" id="GO:0061684">
    <property type="term" value="P:chaperone-mediated autophagy"/>
    <property type="evidence" value="ECO:0000303"/>
    <property type="project" value="ParkinsonsUK-UCL"/>
</dbReference>
<dbReference type="GO" id="GO:0051131">
    <property type="term" value="P:chaperone-mediated protein complex assembly"/>
    <property type="evidence" value="ECO:0000266"/>
    <property type="project" value="RGD"/>
</dbReference>
<dbReference type="GO" id="GO:1902988">
    <property type="term" value="P:neurofibrillary tangle assembly"/>
    <property type="evidence" value="ECO:0000266"/>
    <property type="project" value="RGD"/>
</dbReference>
<dbReference type="GO" id="GO:0001764">
    <property type="term" value="P:neuron migration"/>
    <property type="evidence" value="ECO:0000315"/>
    <property type="project" value="RGD"/>
</dbReference>
<dbReference type="GO" id="GO:0060452">
    <property type="term" value="P:positive regulation of cardiac muscle contraction"/>
    <property type="evidence" value="ECO:0000270"/>
    <property type="project" value="RGD"/>
</dbReference>
<dbReference type="GO" id="GO:0045793">
    <property type="term" value="P:positive regulation of cell size"/>
    <property type="evidence" value="ECO:0000315"/>
    <property type="project" value="RGD"/>
</dbReference>
<dbReference type="GO" id="GO:0002230">
    <property type="term" value="P:positive regulation of defense response to virus by host"/>
    <property type="evidence" value="ECO:0000250"/>
    <property type="project" value="UniProtKB"/>
</dbReference>
<dbReference type="GO" id="GO:0032728">
    <property type="term" value="P:positive regulation of interferon-beta production"/>
    <property type="evidence" value="ECO:0000250"/>
    <property type="project" value="UniProtKB"/>
</dbReference>
<dbReference type="GO" id="GO:0010592">
    <property type="term" value="P:positive regulation of lamellipodium assembly"/>
    <property type="evidence" value="ECO:0000315"/>
    <property type="project" value="RGD"/>
</dbReference>
<dbReference type="GO" id="GO:0045429">
    <property type="term" value="P:positive regulation of nitric oxide biosynthetic process"/>
    <property type="evidence" value="ECO:0000250"/>
    <property type="project" value="UniProtKB"/>
</dbReference>
<dbReference type="GO" id="GO:0045732">
    <property type="term" value="P:positive regulation of protein catabolic process"/>
    <property type="evidence" value="ECO:0000266"/>
    <property type="project" value="RGD"/>
</dbReference>
<dbReference type="GO" id="GO:0042307">
    <property type="term" value="P:positive regulation of protein import into nucleus"/>
    <property type="evidence" value="ECO:0000315"/>
    <property type="project" value="RGD"/>
</dbReference>
<dbReference type="GO" id="GO:0032273">
    <property type="term" value="P:positive regulation of protein polymerization"/>
    <property type="evidence" value="ECO:0000266"/>
    <property type="project" value="RGD"/>
</dbReference>
<dbReference type="GO" id="GO:0006457">
    <property type="term" value="P:protein folding"/>
    <property type="evidence" value="ECO:0000266"/>
    <property type="project" value="RGD"/>
</dbReference>
<dbReference type="GO" id="GO:0045040">
    <property type="term" value="P:protein insertion into mitochondrial outer membrane"/>
    <property type="evidence" value="ECO:0000266"/>
    <property type="project" value="RGD"/>
</dbReference>
<dbReference type="GO" id="GO:0050821">
    <property type="term" value="P:protein stabilization"/>
    <property type="evidence" value="ECO:0000266"/>
    <property type="project" value="RGD"/>
</dbReference>
<dbReference type="GO" id="GO:0042981">
    <property type="term" value="P:regulation of apoptotic process"/>
    <property type="evidence" value="ECO:0000250"/>
    <property type="project" value="UniProtKB"/>
</dbReference>
<dbReference type="GO" id="GO:0099072">
    <property type="term" value="P:regulation of postsynaptic membrane neurotransmitter receptor levels"/>
    <property type="evidence" value="ECO:0000314"/>
    <property type="project" value="SynGO"/>
</dbReference>
<dbReference type="GO" id="GO:0061635">
    <property type="term" value="P:regulation of protein complex stability"/>
    <property type="evidence" value="ECO:0000303"/>
    <property type="project" value="ParkinsonsUK-UCL"/>
</dbReference>
<dbReference type="GO" id="GO:0032880">
    <property type="term" value="P:regulation of protein localization"/>
    <property type="evidence" value="ECO:0000266"/>
    <property type="project" value="RGD"/>
</dbReference>
<dbReference type="GO" id="GO:0031396">
    <property type="term" value="P:regulation of protein ubiquitination"/>
    <property type="evidence" value="ECO:0000266"/>
    <property type="project" value="RGD"/>
</dbReference>
<dbReference type="GO" id="GO:0046677">
    <property type="term" value="P:response to antibiotic"/>
    <property type="evidence" value="ECO:0000250"/>
    <property type="project" value="AgBase"/>
</dbReference>
<dbReference type="GO" id="GO:0042220">
    <property type="term" value="P:response to cocaine"/>
    <property type="evidence" value="ECO:0000270"/>
    <property type="project" value="RGD"/>
</dbReference>
<dbReference type="GO" id="GO:0009409">
    <property type="term" value="P:response to cold"/>
    <property type="evidence" value="ECO:0000250"/>
    <property type="project" value="AgBase"/>
</dbReference>
<dbReference type="GO" id="GO:0043627">
    <property type="term" value="P:response to estrogen"/>
    <property type="evidence" value="ECO:0000270"/>
    <property type="project" value="RGD"/>
</dbReference>
<dbReference type="GO" id="GO:0009408">
    <property type="term" value="P:response to heat"/>
    <property type="evidence" value="ECO:0000250"/>
    <property type="project" value="AgBase"/>
</dbReference>
<dbReference type="GO" id="GO:0009651">
    <property type="term" value="P:response to salt stress"/>
    <property type="evidence" value="ECO:0000270"/>
    <property type="project" value="RGD"/>
</dbReference>
<dbReference type="GO" id="GO:0009410">
    <property type="term" value="P:response to xenobiotic stimulus"/>
    <property type="evidence" value="ECO:0000270"/>
    <property type="project" value="RGD"/>
</dbReference>
<dbReference type="GO" id="GO:0003009">
    <property type="term" value="P:skeletal muscle contraction"/>
    <property type="evidence" value="ECO:0000270"/>
    <property type="project" value="RGD"/>
</dbReference>
<dbReference type="GO" id="GO:1905323">
    <property type="term" value="P:telomerase holoenzyme complex assembly"/>
    <property type="evidence" value="ECO:0000266"/>
    <property type="project" value="RGD"/>
</dbReference>
<dbReference type="GO" id="GO:0007004">
    <property type="term" value="P:telomere maintenance via telomerase"/>
    <property type="evidence" value="ECO:0000266"/>
    <property type="project" value="RGD"/>
</dbReference>
<dbReference type="CDD" id="cd16927">
    <property type="entry name" value="HATPase_Hsp90-like"/>
    <property type="match status" value="1"/>
</dbReference>
<dbReference type="FunFam" id="1.20.120.790:FF:000001">
    <property type="entry name" value="Heat shock protein 90 alpha"/>
    <property type="match status" value="1"/>
</dbReference>
<dbReference type="FunFam" id="3.30.230.80:FF:000001">
    <property type="entry name" value="Heat shock protein 90 alpha"/>
    <property type="match status" value="1"/>
</dbReference>
<dbReference type="FunFam" id="3.40.50.11260:FF:000001">
    <property type="entry name" value="Heat shock protein 90 alpha"/>
    <property type="match status" value="1"/>
</dbReference>
<dbReference type="FunFam" id="3.30.565.10:FF:000204">
    <property type="entry name" value="Heat shock protein HSP 90-beta"/>
    <property type="match status" value="1"/>
</dbReference>
<dbReference type="Gene3D" id="3.30.230.80">
    <property type="match status" value="1"/>
</dbReference>
<dbReference type="Gene3D" id="3.40.50.11260">
    <property type="match status" value="1"/>
</dbReference>
<dbReference type="Gene3D" id="1.20.120.790">
    <property type="entry name" value="Heat shock protein 90, C-terminal domain"/>
    <property type="match status" value="1"/>
</dbReference>
<dbReference type="Gene3D" id="3.30.565.10">
    <property type="entry name" value="Histidine kinase-like ATPase, C-terminal domain"/>
    <property type="match status" value="1"/>
</dbReference>
<dbReference type="HAMAP" id="MF_00505">
    <property type="entry name" value="HSP90"/>
    <property type="match status" value="1"/>
</dbReference>
<dbReference type="InterPro" id="IPR036890">
    <property type="entry name" value="HATPase_C_sf"/>
</dbReference>
<dbReference type="InterPro" id="IPR019805">
    <property type="entry name" value="Heat_shock_protein_90_CS"/>
</dbReference>
<dbReference type="InterPro" id="IPR037196">
    <property type="entry name" value="HSP90_C"/>
</dbReference>
<dbReference type="InterPro" id="IPR001404">
    <property type="entry name" value="Hsp90_fam"/>
</dbReference>
<dbReference type="InterPro" id="IPR020575">
    <property type="entry name" value="Hsp90_N"/>
</dbReference>
<dbReference type="InterPro" id="IPR020568">
    <property type="entry name" value="Ribosomal_Su5_D2-typ_SF"/>
</dbReference>
<dbReference type="NCBIfam" id="NF003555">
    <property type="entry name" value="PRK05218.1"/>
    <property type="match status" value="1"/>
</dbReference>
<dbReference type="PANTHER" id="PTHR11528">
    <property type="entry name" value="HEAT SHOCK PROTEIN 90 FAMILY MEMBER"/>
    <property type="match status" value="1"/>
</dbReference>
<dbReference type="Pfam" id="PF13589">
    <property type="entry name" value="HATPase_c_3"/>
    <property type="match status" value="1"/>
</dbReference>
<dbReference type="Pfam" id="PF00183">
    <property type="entry name" value="HSP90"/>
    <property type="match status" value="1"/>
</dbReference>
<dbReference type="PIRSF" id="PIRSF002583">
    <property type="entry name" value="Hsp90"/>
    <property type="match status" value="1"/>
</dbReference>
<dbReference type="PRINTS" id="PR00775">
    <property type="entry name" value="HEATSHOCK90"/>
</dbReference>
<dbReference type="SMART" id="SM00387">
    <property type="entry name" value="HATPase_c"/>
    <property type="match status" value="1"/>
</dbReference>
<dbReference type="SUPFAM" id="SSF55874">
    <property type="entry name" value="ATPase domain of HSP90 chaperone/DNA topoisomerase II/histidine kinase"/>
    <property type="match status" value="1"/>
</dbReference>
<dbReference type="SUPFAM" id="SSF110942">
    <property type="entry name" value="HSP90 C-terminal domain"/>
    <property type="match status" value="1"/>
</dbReference>
<dbReference type="SUPFAM" id="SSF54211">
    <property type="entry name" value="Ribosomal protein S5 domain 2-like"/>
    <property type="match status" value="1"/>
</dbReference>
<dbReference type="PROSITE" id="PS00298">
    <property type="entry name" value="HSP90"/>
    <property type="match status" value="1"/>
</dbReference>
<organism>
    <name type="scientific">Rattus norvegicus</name>
    <name type="common">Rat</name>
    <dbReference type="NCBI Taxonomy" id="10116"/>
    <lineage>
        <taxon>Eukaryota</taxon>
        <taxon>Metazoa</taxon>
        <taxon>Chordata</taxon>
        <taxon>Craniata</taxon>
        <taxon>Vertebrata</taxon>
        <taxon>Euteleostomi</taxon>
        <taxon>Mammalia</taxon>
        <taxon>Eutheria</taxon>
        <taxon>Euarchontoglires</taxon>
        <taxon>Glires</taxon>
        <taxon>Rodentia</taxon>
        <taxon>Myomorpha</taxon>
        <taxon>Muroidea</taxon>
        <taxon>Muridae</taxon>
        <taxon>Murinae</taxon>
        <taxon>Rattus</taxon>
    </lineage>
</organism>
<gene>
    <name evidence="9" type="primary">Hsp90aa1</name>
    <name type="synonym">Hsp86</name>
    <name type="synonym">Hspca</name>
</gene>
<name>HS90A_RAT</name>
<reference key="1">
    <citation type="submission" date="2001-05" db="EMBL/GenBank/DDBJ databases">
        <title>Cloning of rat 86-kDa heat shock protein gene and promoter.</title>
        <authorList>
            <person name="Li C.W."/>
            <person name="Chang M.T."/>
            <person name="Lai Y."/>
            <person name="Chang W.M."/>
            <person name="Lai Y.K."/>
        </authorList>
    </citation>
    <scope>NUCLEOTIDE SEQUENCE [GENOMIC DNA]</scope>
    <source>
        <tissue>Brain</tissue>
    </source>
</reference>
<reference key="2">
    <citation type="submission" date="2002-01" db="EMBL/GenBank/DDBJ databases">
        <title>Cloning of full length cDNA of rat 86-kDa heat shock protein gene.</title>
        <authorList>
            <person name="Lai Y.R."/>
            <person name="Chang M.D."/>
            <person name="Chang W.M."/>
            <person name="Su C.Y."/>
            <person name="Lai Y.K."/>
        </authorList>
    </citation>
    <scope>NUCLEOTIDE SEQUENCE [MRNA]</scope>
    <source>
        <tissue>Brain</tissue>
    </source>
</reference>
<reference key="3">
    <citation type="journal article" date="2004" name="Genome Res.">
        <title>The status, quality, and expansion of the NIH full-length cDNA project: the Mammalian Gene Collection (MGC).</title>
        <authorList>
            <consortium name="The MGC Project Team"/>
        </authorList>
    </citation>
    <scope>NUCLEOTIDE SEQUENCE [LARGE SCALE MRNA]</scope>
    <source>
        <tissue>Heart</tissue>
        <tissue>Testis</tissue>
    </source>
</reference>
<reference key="4">
    <citation type="journal article" date="2001" name="Protoplasma">
        <title>Isolation and quantification of the heat shock protein 90 alpha and beta isoforms from rat liver.</title>
        <authorList>
            <person name="Langer T."/>
            <person name="Fasold H."/>
        </authorList>
    </citation>
    <scope>PROTEIN SEQUENCE OF 2-13</scope>
    <source>
        <strain>Sprague-Dawley</strain>
        <tissue>Liver</tissue>
    </source>
</reference>
<reference key="5">
    <citation type="submission" date="2006-11" db="UniProtKB">
        <authorList>
            <person name="Lubec G."/>
            <person name="Afjehi-Sadat L."/>
        </authorList>
    </citation>
    <scope>PROTEIN SEQUENCE OF 154-173; 329-339 AND 347-356</scope>
    <scope>IDENTIFICATION BY MASS SPECTROMETRY</scope>
    <source>
        <strain>Sprague-Dawley</strain>
        <tissue>Spinal cord</tissue>
    </source>
</reference>
<reference key="6">
    <citation type="journal article" date="2005" name="Arch. Biochem. Biophys.">
        <title>Small glutamine-rich tetratricopeptide repeat-containing protein is composed of three structural units with distinct functions.</title>
        <authorList>
            <person name="Liou S.T."/>
            <person name="Wang C."/>
        </authorList>
    </citation>
    <scope>INTERACTION WITH SGTA</scope>
</reference>
<reference key="7">
    <citation type="journal article" date="2012" name="Nat. Commun.">
        <title>Quantitative maps of protein phosphorylation sites across 14 different rat organs and tissues.</title>
        <authorList>
            <person name="Lundby A."/>
            <person name="Secher A."/>
            <person name="Lage K."/>
            <person name="Nordsborg N.B."/>
            <person name="Dmytriyev A."/>
            <person name="Lundby C."/>
            <person name="Olsen J.V."/>
        </authorList>
    </citation>
    <scope>PHOSPHORYLATION [LARGE SCALE ANALYSIS] AT SER-231; SER-252; SER-263 AND SER-454</scope>
    <scope>IDENTIFICATION BY MASS SPECTROMETRY [LARGE SCALE ANALYSIS]</scope>
</reference>
<reference key="8">
    <citation type="journal article" date="2017" name="J. Cell. Biochem.">
        <title>Interaction of a Novel Chaperone PhLP2A With the Heat Shock Protein Hsp90.</title>
        <authorList>
            <person name="Krzemien-Ojak L."/>
            <person name="Goral A."/>
            <person name="Joachimiak E."/>
            <person name="Filipek A."/>
            <person name="Fabczak H."/>
        </authorList>
    </citation>
    <scope>INTERACTION WITH PDCL3</scope>
</reference>
<sequence length="733" mass="84815">MPEETQTQDQPMEEEEVETFAFQAEIAQLMSLIINTFYSNKEIFLRELISNSSDALDKIRYESLTDPSKLDSGKELHINLIPNKQDRTLTIVDTGIGMTKADLINNLGTIAKSGTKAFMEALQAGADISMIGQFGVGFYSAYLVAEKVTVITKHNDDEQYAWESSAGGSFTVRTDTGEPMGRGTKVILHLKEDQTEYLEERRIKEIVKKHSQFIGYPITLFVEKERDKEVSDDEAEEKEEKEEEKEKEEKESDDKPEIEDVGSDEEEEEKKDGDKKKKKKIKEKYIDQEELNKTKPIWTRNPDDITNEEYGEFYKSLTNDWEEHLAVKHFSVEGQLEFRALLFVPRRAPFDLFENRKKKNNIKLYVRRVFIMDNCEELIPEYLNFIRGVVDSEDLPLNISREMLQQSKILKVIRKNLVKKCLELFTELAEDKENYKKFYEQFSKNIKLGIHEDSQNRKKLSELLRYYTSASGDEMVSLKDYCTRMKENQKHIYFITGETKDQVANSAFVERLRKHGLEVIYMIEPIDEYCVQQLKEFEGKTLVSVTKEGLELPEDEEEKKKQEEKKTKFENLCKIMKDILEKKVEKVVVSNRLVTSPCCIVTSTYGWTANMERIMKAQALRDNSTMGYMAAKKHLEINPDHSIIETLRQKAEADKNDKSVKDLVILLYETALLSSGFSLEDPQTHANRIYRMIKLGLGIDEDDPTVDDTSAAVTEEMPPLEGDDDTSRMEEVD</sequence>
<feature type="initiator methionine" description="Removed" evidence="5">
    <location>
        <position position="1"/>
    </location>
</feature>
<feature type="chain" id="PRO_0000062915" description="Heat shock protein HSP 90-alpha">
    <location>
        <begin position="2"/>
        <end position="733"/>
    </location>
</feature>
<feature type="region of interest" description="Interaction with NR3C1" evidence="3">
    <location>
        <begin position="9"/>
        <end position="236"/>
    </location>
</feature>
<feature type="region of interest" description="Disordered" evidence="4">
    <location>
        <begin position="225"/>
        <end position="279"/>
    </location>
</feature>
<feature type="region of interest" description="Interaction with NR3C1" evidence="3">
    <location>
        <begin position="272"/>
        <end position="617"/>
    </location>
</feature>
<feature type="region of interest" description="Interaction with FLCN and FNIP1" evidence="2">
    <location>
        <begin position="285"/>
        <end position="733"/>
    </location>
</feature>
<feature type="region of interest" description="Interaction with FNIP2 and TSC1" evidence="2">
    <location>
        <begin position="285"/>
        <end position="621"/>
    </location>
</feature>
<feature type="region of interest" description="Interaction with NR1D1" evidence="3">
    <location>
        <begin position="629"/>
        <end position="732"/>
    </location>
</feature>
<feature type="region of interest" description="Required for homodimerization" evidence="2">
    <location>
        <begin position="683"/>
        <end position="733"/>
    </location>
</feature>
<feature type="region of interest" description="Disordered" evidence="4">
    <location>
        <begin position="701"/>
        <end position="733"/>
    </location>
</feature>
<feature type="region of interest" description="Essential for interaction with SMYD3, TSC1 and STIP1/HOP" evidence="2">
    <location>
        <begin position="729"/>
        <end position="733"/>
    </location>
</feature>
<feature type="region of interest" description="Essential for interaction with SGTA and TTC1" evidence="2">
    <location>
        <begin position="730"/>
        <end position="733"/>
    </location>
</feature>
<feature type="short sequence motif" description="TPR repeat-binding" evidence="2">
    <location>
        <begin position="724"/>
        <end position="733"/>
    </location>
</feature>
<feature type="compositionally biased region" description="Acidic residues" evidence="4">
    <location>
        <begin position="230"/>
        <end position="246"/>
    </location>
</feature>
<feature type="compositionally biased region" description="Acidic residues" evidence="4">
    <location>
        <begin position="256"/>
        <end position="269"/>
    </location>
</feature>
<feature type="binding site" evidence="1">
    <location>
        <position position="51"/>
    </location>
    <ligand>
        <name>ATP</name>
        <dbReference type="ChEBI" id="CHEBI:30616"/>
    </ligand>
</feature>
<feature type="binding site" evidence="1">
    <location>
        <position position="93"/>
    </location>
    <ligand>
        <name>ATP</name>
        <dbReference type="ChEBI" id="CHEBI:30616"/>
    </ligand>
</feature>
<feature type="binding site" evidence="1">
    <location>
        <position position="112"/>
    </location>
    <ligand>
        <name>ATP</name>
        <dbReference type="ChEBI" id="CHEBI:30616"/>
    </ligand>
</feature>
<feature type="binding site" evidence="1">
    <location>
        <position position="138"/>
    </location>
    <ligand>
        <name>ATP</name>
        <dbReference type="ChEBI" id="CHEBI:30616"/>
    </ligand>
</feature>
<feature type="binding site" evidence="1">
    <location>
        <position position="401"/>
    </location>
    <ligand>
        <name>ATP</name>
        <dbReference type="ChEBI" id="CHEBI:30616"/>
    </ligand>
</feature>
<feature type="modified residue" description="Phosphothreonine; by PRKDC" evidence="2">
    <location>
        <position position="5"/>
    </location>
</feature>
<feature type="modified residue" description="Phosphothreonine; by PRKDC" evidence="2">
    <location>
        <position position="7"/>
    </location>
</feature>
<feature type="modified residue" description="N6-acetyllysine" evidence="3">
    <location>
        <position position="58"/>
    </location>
</feature>
<feature type="modified residue" description="N6-acetyllysine" evidence="3">
    <location>
        <position position="84"/>
    </location>
</feature>
<feature type="modified residue" description="Phosphoserine" evidence="10">
    <location>
        <position position="231"/>
    </location>
</feature>
<feature type="modified residue" description="Phosphoserine" evidence="10">
    <location>
        <position position="252"/>
    </location>
</feature>
<feature type="modified residue" description="Phosphoserine" evidence="10">
    <location>
        <position position="263"/>
    </location>
</feature>
<feature type="modified residue" description="Phosphotyrosine" evidence="3">
    <location>
        <position position="314"/>
    </location>
</feature>
<feature type="modified residue" description="N6-acetyllysine" evidence="2">
    <location>
        <position position="444"/>
    </location>
</feature>
<feature type="modified residue" description="Phosphoserine" evidence="10">
    <location>
        <position position="454"/>
    </location>
</feature>
<feature type="modified residue" description="N6-acetyllysine" evidence="2">
    <location>
        <position position="459"/>
    </location>
</feature>
<feature type="modified residue" description="Phosphoserine" evidence="2">
    <location>
        <position position="477"/>
    </location>
</feature>
<feature type="modified residue" description="N6-acetyllysine" evidence="2">
    <location>
        <position position="490"/>
    </location>
</feature>
<feature type="modified residue" description="Phosphotyrosine" evidence="3">
    <location>
        <position position="493"/>
    </location>
</feature>
<feature type="modified residue" description="N6-acetyllysine" evidence="2">
    <location>
        <position position="586"/>
    </location>
</feature>
<feature type="modified residue" description="S-nitrosocysteine" evidence="2">
    <location>
        <position position="599"/>
    </location>
</feature>
<feature type="modified residue" description="Phosphoserine" evidence="2">
    <location>
        <position position="642"/>
    </location>
</feature>
<proteinExistence type="evidence at protein level"/>